<feature type="chain" id="PRO_0000367817" description="Non-structural protein 3">
    <location>
        <begin position="1"/>
        <end position="313"/>
    </location>
</feature>
<feature type="region of interest" description="RNA-binding" evidence="2">
    <location>
        <begin position="1"/>
        <end position="149"/>
    </location>
</feature>
<feature type="region of interest" description="Dimerization" evidence="2">
    <location>
        <begin position="150"/>
        <end position="206"/>
    </location>
</feature>
<feature type="region of interest" description="Interaction with host ZC3H7B" evidence="2">
    <location>
        <begin position="170"/>
        <end position="234"/>
    </location>
</feature>
<feature type="region of interest" description="Interaction with host EIF4G1" evidence="2">
    <location>
        <begin position="208"/>
        <end position="313"/>
    </location>
</feature>
<feature type="coiled-coil region" evidence="2">
    <location>
        <begin position="166"/>
        <end position="237"/>
    </location>
</feature>
<protein>
    <recommendedName>
        <fullName evidence="2">Non-structural protein 3</fullName>
        <shortName evidence="2">NSP3</shortName>
    </recommendedName>
    <alternativeName>
        <fullName evidence="2">NCVP4</fullName>
    </alternativeName>
    <alternativeName>
        <fullName evidence="2">Non-structural RNA-binding protein 34</fullName>
        <shortName evidence="2">NS34</shortName>
    </alternativeName>
</protein>
<sequence length="313" mass="36315">MLKMESTQQMASSIINSSFEAAVVAATSTLELMGIQYDYNEVYTRVKSKFDLVMDDSGVKNNLIGKAITIDQALNGKFSSAIRNRNWMTDSRTVAKLDEDVNKLRIMLSSKGIDQKMRVLNACFSVKRIPGKSSSIVKCTRLMKDKLERGEVEVDDSFVEEKMEVDTIDWKSRYEQLEKRFESLKHRVNEKYNHWVLKARKVNENMNSLQNVISQQQAHINELQMYNNKLERDLQSKIGSVVSSIEWYLRSMELSDDVKSDIEQQLNSIDQLNPVNAIDDFESILRNLISDYDRLFIMFKGLLQQCNYTYTYE</sequence>
<keyword id="KW-0175">Coiled coil</keyword>
<keyword id="KW-1035">Host cytoplasm</keyword>
<keyword id="KW-0945">Host-virus interaction</keyword>
<keyword id="KW-0694">RNA-binding</keyword>
<keyword id="KW-0810">Translation regulation</keyword>
<organism>
    <name type="scientific">Rotavirus A (strain RVA/Monkey/United States/RRV/1975/G3P5B[3])</name>
    <name type="common">RV-A</name>
    <dbReference type="NCBI Taxonomy" id="444185"/>
    <lineage>
        <taxon>Viruses</taxon>
        <taxon>Riboviria</taxon>
        <taxon>Orthornavirae</taxon>
        <taxon>Duplornaviricota</taxon>
        <taxon>Resentoviricetes</taxon>
        <taxon>Reovirales</taxon>
        <taxon>Sedoreoviridae</taxon>
        <taxon>Rotavirus</taxon>
        <taxon>Rotavirus A</taxon>
    </lineage>
</organism>
<organismHost>
    <name type="scientific">Macaca mulatta</name>
    <name type="common">Rhesus macaque</name>
    <dbReference type="NCBI Taxonomy" id="9544"/>
</organismHost>
<evidence type="ECO:0000250" key="1">
    <source>
        <dbReference type="UniProtKB" id="Q86504"/>
    </source>
</evidence>
<evidence type="ECO:0000255" key="2">
    <source>
        <dbReference type="HAMAP-Rule" id="MF_04094"/>
    </source>
</evidence>
<evidence type="ECO:0000269" key="3">
    <source>
    </source>
</evidence>
<evidence type="ECO:0000269" key="4">
    <source>
    </source>
</evidence>
<evidence type="ECO:0000269" key="5">
    <source>
    </source>
</evidence>
<name>NSP3_ROTRH</name>
<dbReference type="EMBL" id="AY065842">
    <property type="protein sequence ID" value="AAL58536.1"/>
    <property type="molecule type" value="Genomic_RNA"/>
</dbReference>
<dbReference type="EMBL" id="DQ391186">
    <property type="protein sequence ID" value="ABD52871.1"/>
    <property type="molecule type" value="Genomic_RNA"/>
</dbReference>
<dbReference type="SMR" id="Q8UZL8"/>
<dbReference type="GO" id="GO:0030430">
    <property type="term" value="C:host cell cytoplasm"/>
    <property type="evidence" value="ECO:0007669"/>
    <property type="project" value="UniProtKB-SubCell"/>
</dbReference>
<dbReference type="GO" id="GO:0003723">
    <property type="term" value="F:RNA binding"/>
    <property type="evidence" value="ECO:0007669"/>
    <property type="project" value="UniProtKB-UniRule"/>
</dbReference>
<dbReference type="GO" id="GO:0006417">
    <property type="term" value="P:regulation of translation"/>
    <property type="evidence" value="ECO:0007669"/>
    <property type="project" value="UniProtKB-UniRule"/>
</dbReference>
<dbReference type="CDD" id="cd20714">
    <property type="entry name" value="NSP3_rotavirus"/>
    <property type="match status" value="1"/>
</dbReference>
<dbReference type="Gene3D" id="3.30.70.1610">
    <property type="match status" value="1"/>
</dbReference>
<dbReference type="Gene3D" id="1.20.5.970">
    <property type="entry name" value="Nonstructural RNA-binding protein"/>
    <property type="match status" value="1"/>
</dbReference>
<dbReference type="Gene3D" id="6.10.280.20">
    <property type="entry name" value="Rotavirus non-structural protein NSP3, N-terminal domain"/>
    <property type="match status" value="1"/>
</dbReference>
<dbReference type="HAMAP" id="MF_04094">
    <property type="entry name" value="ROTA_A_NSP3"/>
    <property type="match status" value="1"/>
</dbReference>
<dbReference type="HAMAP" id="MF_04090">
    <property type="entry name" value="ROTA_NSP3"/>
    <property type="match status" value="1"/>
</dbReference>
<dbReference type="InterPro" id="IPR042519">
    <property type="entry name" value="NSP3_N_rotavirus"/>
</dbReference>
<dbReference type="InterPro" id="IPR036082">
    <property type="entry name" value="NSP3_sf"/>
</dbReference>
<dbReference type="InterPro" id="IPR002873">
    <property type="entry name" value="Rotavirus_NSP3"/>
</dbReference>
<dbReference type="Pfam" id="PF01665">
    <property type="entry name" value="Rota_NSP3"/>
    <property type="match status" value="1"/>
</dbReference>
<dbReference type="SUPFAM" id="SSF69903">
    <property type="entry name" value="NSP3 homodimer"/>
    <property type="match status" value="1"/>
</dbReference>
<dbReference type="SUPFAM" id="SSF58030">
    <property type="entry name" value="Rotavirus nonstructural proteins"/>
    <property type="match status" value="1"/>
</dbReference>
<comment type="function">
    <text evidence="2 3 4 5">Plays an important role in stimulating the translation of viral mRNAs. These mRNAs are capped but not polyadenylated, instead terminating in a conserved sequence 'GACC' at the 3' that is recognized by NSP3, which competes with host PABPC1 for EIF4G1 binding. The interaction between NSP3 and host EIF4G1 stabilizes the EIF4E-EIF4G1 interaction, thereby facilitating the initiation of capped mRNA translation.</text>
</comment>
<comment type="subunit">
    <text evidence="1 2 5">Homodimer. Interacts (via the coiled-coil region) with host ZC3H7B (via LD motif). Interacts with host EIF4G1.</text>
</comment>
<comment type="subcellular location">
    <subcellularLocation>
        <location evidence="2 5">Host cytoplasm</location>
    </subcellularLocation>
</comment>
<comment type="similarity">
    <text evidence="2">Belongs to the rotavirus NSP3 family.</text>
</comment>
<reference key="1">
    <citation type="journal article" date="2002" name="J. Virol.">
        <title>Rotavirus genome segment 7 (NSP3) is a determinant of extraintestinal spread in the neonatal mouse.</title>
        <authorList>
            <person name="Mossel E.C."/>
            <person name="Ramig R.F."/>
        </authorList>
    </citation>
    <scope>NUCLEOTIDE SEQUENCE [GENOMIC RNA]</scope>
</reference>
<reference key="2">
    <citation type="journal article" date="2006" name="J. Virol.">
        <title>Extraintestinal spread and replication of a homologous EC rotavirus strain and a heterologous rhesus rotavirus in BALB/c mice.</title>
        <authorList>
            <person name="Fenaux M."/>
            <person name="Cuadras M.A."/>
            <person name="Feng N."/>
            <person name="Jaimes M."/>
            <person name="Greenberg H.B."/>
        </authorList>
    </citation>
    <scope>NUCLEOTIDE SEQUENCE [GENOMIC RNA] OF 2-213</scope>
</reference>
<reference key="3">
    <citation type="journal article" date="2002" name="Virology">
        <title>Rotavirus protein NSP3 shuts off host cell protein synthesis.</title>
        <authorList>
            <person name="Padilla-Noriega L."/>
            <person name="Paniagua O."/>
            <person name="Guzman-Leon S."/>
        </authorList>
    </citation>
    <scope>FUNCTION</scope>
</reference>
<reference key="4">
    <citation type="journal article" date="2006" name="J. Virol.">
        <title>Rotavirus nonstructural protein NSP3 is not required for viral protein synthesis.</title>
        <authorList>
            <person name="Montero H."/>
            <person name="Arias C.F."/>
            <person name="Lopez S."/>
        </authorList>
    </citation>
    <scope>FUNCTION</scope>
</reference>
<reference key="5">
    <citation type="journal article" date="2015" name="J. Virol.">
        <title>Rotavirus NSP3 Is a Translational Surrogate of the Poly(A) Binding Protein-Poly(A) Complex.</title>
        <authorList>
            <person name="Gratia M."/>
            <person name="Sarot E."/>
            <person name="Vende P."/>
            <person name="Charpilienne A."/>
            <person name="Baron C.H."/>
            <person name="Duarte M."/>
            <person name="Pyronnet S."/>
            <person name="Poncet D."/>
        </authorList>
    </citation>
    <scope>FUNCTION</scope>
    <scope>INTERACTION WITH HOST EIF4G1</scope>
</reference>
<proteinExistence type="evidence at protein level"/>
<accession>Q8UZL8</accession>
<accession>Q27PP2</accession>